<feature type="chain" id="PRO_0000306415" description="GTP cyclohydrolase-2">
    <location>
        <begin position="1"/>
        <end position="398"/>
    </location>
</feature>
<feature type="region of interest" description="Unknown">
    <location>
        <begin position="1"/>
        <end position="172"/>
    </location>
</feature>
<feature type="region of interest" description="GTP cyclohydrolase II">
    <location>
        <begin position="173"/>
        <end position="398"/>
    </location>
</feature>
<feature type="region of interest" description="Disordered" evidence="3">
    <location>
        <begin position="375"/>
        <end position="398"/>
    </location>
</feature>
<feature type="active site" description="Proton acceptor" evidence="2">
    <location>
        <position position="297"/>
    </location>
</feature>
<feature type="active site" description="Nucleophile" evidence="1">
    <location>
        <position position="299"/>
    </location>
</feature>
<feature type="binding site" evidence="1">
    <location>
        <begin position="220"/>
        <end position="224"/>
    </location>
    <ligand>
        <name>GTP</name>
        <dbReference type="ChEBI" id="CHEBI:37565"/>
    </ligand>
</feature>
<feature type="binding site" evidence="1">
    <location>
        <position position="225"/>
    </location>
    <ligand>
        <name>Zn(2+)</name>
        <dbReference type="ChEBI" id="CHEBI:29105"/>
        <note>catalytic</note>
    </ligand>
</feature>
<feature type="binding site" evidence="1">
    <location>
        <position position="236"/>
    </location>
    <ligand>
        <name>Zn(2+)</name>
        <dbReference type="ChEBI" id="CHEBI:29105"/>
        <note>catalytic</note>
    </ligand>
</feature>
<feature type="binding site" evidence="1">
    <location>
        <position position="238"/>
    </location>
    <ligand>
        <name>Zn(2+)</name>
        <dbReference type="ChEBI" id="CHEBI:29105"/>
        <note>catalytic</note>
    </ligand>
</feature>
<feature type="binding site" evidence="1">
    <location>
        <position position="241"/>
    </location>
    <ligand>
        <name>GTP</name>
        <dbReference type="ChEBI" id="CHEBI:37565"/>
    </ligand>
</feature>
<feature type="binding site" evidence="1">
    <location>
        <begin position="263"/>
        <end position="265"/>
    </location>
    <ligand>
        <name>GTP</name>
        <dbReference type="ChEBI" id="CHEBI:37565"/>
    </ligand>
</feature>
<feature type="binding site" evidence="1">
    <location>
        <position position="285"/>
    </location>
    <ligand>
        <name>GTP</name>
        <dbReference type="ChEBI" id="CHEBI:37565"/>
    </ligand>
</feature>
<feature type="binding site" evidence="1">
    <location>
        <position position="320"/>
    </location>
    <ligand>
        <name>GTP</name>
        <dbReference type="ChEBI" id="CHEBI:37565"/>
    </ligand>
</feature>
<feature type="binding site" evidence="1">
    <location>
        <position position="325"/>
    </location>
    <ligand>
        <name>GTP</name>
        <dbReference type="ChEBI" id="CHEBI:37565"/>
    </ligand>
</feature>
<organism>
    <name type="scientific">Xylella fastidiosa (strain 9a5c)</name>
    <dbReference type="NCBI Taxonomy" id="160492"/>
    <lineage>
        <taxon>Bacteria</taxon>
        <taxon>Pseudomonadati</taxon>
        <taxon>Pseudomonadota</taxon>
        <taxon>Gammaproteobacteria</taxon>
        <taxon>Lysobacterales</taxon>
        <taxon>Lysobacteraceae</taxon>
        <taxon>Xylella</taxon>
    </lineage>
</organism>
<accession>Q9PBZ3</accession>
<protein>
    <recommendedName>
        <fullName>GTP cyclohydrolase-2</fullName>
        <ecNumber>3.5.4.25</ecNumber>
    </recommendedName>
    <alternativeName>
        <fullName>GTP cyclohydrolase II</fullName>
    </alternativeName>
</protein>
<keyword id="KW-0342">GTP-binding</keyword>
<keyword id="KW-0378">Hydrolase</keyword>
<keyword id="KW-0479">Metal-binding</keyword>
<keyword id="KW-0547">Nucleotide-binding</keyword>
<keyword id="KW-0686">Riboflavin biosynthesis</keyword>
<keyword id="KW-0862">Zinc</keyword>
<name>RIBA_XYLFA</name>
<comment type="function">
    <text evidence="1">Catalyzes the conversion of GTP to 2,5-diamino-6-ribosylamino-4(3H)-pyrimidinone 5'-phosphate (DARP), formate and pyrophosphate.</text>
</comment>
<comment type="catalytic activity">
    <reaction>
        <text>GTP + 4 H2O = 2,5-diamino-6-hydroxy-4-(5-phosphoribosylamino)-pyrimidine + formate + 2 phosphate + 3 H(+)</text>
        <dbReference type="Rhea" id="RHEA:23704"/>
        <dbReference type="ChEBI" id="CHEBI:15377"/>
        <dbReference type="ChEBI" id="CHEBI:15378"/>
        <dbReference type="ChEBI" id="CHEBI:15740"/>
        <dbReference type="ChEBI" id="CHEBI:37565"/>
        <dbReference type="ChEBI" id="CHEBI:43474"/>
        <dbReference type="ChEBI" id="CHEBI:58614"/>
        <dbReference type="EC" id="3.5.4.25"/>
    </reaction>
</comment>
<comment type="cofactor">
    <cofactor evidence="1">
        <name>Zn(2+)</name>
        <dbReference type="ChEBI" id="CHEBI:29105"/>
    </cofactor>
    <text evidence="1">Binds 1 zinc ion per subunit.</text>
</comment>
<comment type="pathway">
    <text>Cofactor biosynthesis; riboflavin biosynthesis; 5-amino-6-(D-ribitylamino)uracil from GTP: step 1/4.</text>
</comment>
<comment type="similarity">
    <text evidence="4">In the C-terminal section; belongs to the GTP cyclohydrolase II family.</text>
</comment>
<proteinExistence type="inferred from homology"/>
<sequence length="398" mass="42975">MNTPTHTHPHPFGSTATIRCERAAAELRTGRPVLLIDAHTRRHAVMALDSMTAQSFTTFANAVGNTHYLFLTPARSNVLGLEAPQGARIPLATLSYDSLVKLAYLRQPTHPTTWVPGDIMDAAATEITRLALLLPAIVAAPLTHHTEHAFADCQTLDLTDLDTAAAGASTTEYELVTRTPVPLRDLGMSEFIVFRGGIAQRDQVAILIGQPDLSSAVPVRVHSSCLTGDLFGSLKCDCGDQLRHGLATLKALGGGVLLYLDQEGRGNGIAAKIRAYGYQHVGLDTIDADAQLGFGPDERRYTGAVMMLRALGITRIQLLSNNPTKVERLRAAGIIVEQRIPVIGQITEQNEYYLRTKVSRAGHDLDIDALIMTSQRPQDPSETVDGETVKSIPKTGHA</sequence>
<gene>
    <name type="primary">ribA</name>
    <name type="ordered locus">XF_1992</name>
</gene>
<reference key="1">
    <citation type="journal article" date="2000" name="Nature">
        <title>The genome sequence of the plant pathogen Xylella fastidiosa.</title>
        <authorList>
            <person name="Simpson A.J.G."/>
            <person name="Reinach F.C."/>
            <person name="Arruda P."/>
            <person name="Abreu F.A."/>
            <person name="Acencio M."/>
            <person name="Alvarenga R."/>
            <person name="Alves L.M.C."/>
            <person name="Araya J.E."/>
            <person name="Baia G.S."/>
            <person name="Baptista C.S."/>
            <person name="Barros M.H."/>
            <person name="Bonaccorsi E.D."/>
            <person name="Bordin S."/>
            <person name="Bove J.M."/>
            <person name="Briones M.R.S."/>
            <person name="Bueno M.R.P."/>
            <person name="Camargo A.A."/>
            <person name="Camargo L.E.A."/>
            <person name="Carraro D.M."/>
            <person name="Carrer H."/>
            <person name="Colauto N.B."/>
            <person name="Colombo C."/>
            <person name="Costa F.F."/>
            <person name="Costa M.C.R."/>
            <person name="Costa-Neto C.M."/>
            <person name="Coutinho L.L."/>
            <person name="Cristofani M."/>
            <person name="Dias-Neto E."/>
            <person name="Docena C."/>
            <person name="El-Dorry H."/>
            <person name="Facincani A.P."/>
            <person name="Ferreira A.J.S."/>
            <person name="Ferreira V.C.A."/>
            <person name="Ferro J.A."/>
            <person name="Fraga J.S."/>
            <person name="Franca S.C."/>
            <person name="Franco M.C."/>
            <person name="Frohme M."/>
            <person name="Furlan L.R."/>
            <person name="Garnier M."/>
            <person name="Goldman G.H."/>
            <person name="Goldman M.H.S."/>
            <person name="Gomes S.L."/>
            <person name="Gruber A."/>
            <person name="Ho P.L."/>
            <person name="Hoheisel J.D."/>
            <person name="Junqueira M.L."/>
            <person name="Kemper E.L."/>
            <person name="Kitajima J.P."/>
            <person name="Krieger J.E."/>
            <person name="Kuramae E.E."/>
            <person name="Laigret F."/>
            <person name="Lambais M.R."/>
            <person name="Leite L.C.C."/>
            <person name="Lemos E.G.M."/>
            <person name="Lemos M.V.F."/>
            <person name="Lopes S.A."/>
            <person name="Lopes C.R."/>
            <person name="Machado J.A."/>
            <person name="Machado M.A."/>
            <person name="Madeira A.M.B.N."/>
            <person name="Madeira H.M.F."/>
            <person name="Marino C.L."/>
            <person name="Marques M.V."/>
            <person name="Martins E.A.L."/>
            <person name="Martins E.M.F."/>
            <person name="Matsukuma A.Y."/>
            <person name="Menck C.F.M."/>
            <person name="Miracca E.C."/>
            <person name="Miyaki C.Y."/>
            <person name="Monteiro-Vitorello C.B."/>
            <person name="Moon D.H."/>
            <person name="Nagai M.A."/>
            <person name="Nascimento A.L.T.O."/>
            <person name="Netto L.E.S."/>
            <person name="Nhani A. Jr."/>
            <person name="Nobrega F.G."/>
            <person name="Nunes L.R."/>
            <person name="Oliveira M.A."/>
            <person name="de Oliveira M.C."/>
            <person name="de Oliveira R.C."/>
            <person name="Palmieri D.A."/>
            <person name="Paris A."/>
            <person name="Peixoto B.R."/>
            <person name="Pereira G.A.G."/>
            <person name="Pereira H.A. Jr."/>
            <person name="Pesquero J.B."/>
            <person name="Quaggio R.B."/>
            <person name="Roberto P.G."/>
            <person name="Rodrigues V."/>
            <person name="de Rosa A.J.M."/>
            <person name="de Rosa V.E. Jr."/>
            <person name="de Sa R.G."/>
            <person name="Santelli R.V."/>
            <person name="Sawasaki H.E."/>
            <person name="da Silva A.C.R."/>
            <person name="da Silva A.M."/>
            <person name="da Silva F.R."/>
            <person name="Silva W.A. Jr."/>
            <person name="da Silveira J.F."/>
            <person name="Silvestri M.L.Z."/>
            <person name="Siqueira W.J."/>
            <person name="de Souza A.A."/>
            <person name="de Souza A.P."/>
            <person name="Terenzi M.F."/>
            <person name="Truffi D."/>
            <person name="Tsai S.M."/>
            <person name="Tsuhako M.H."/>
            <person name="Vallada H."/>
            <person name="Van Sluys M.A."/>
            <person name="Verjovski-Almeida S."/>
            <person name="Vettore A.L."/>
            <person name="Zago M.A."/>
            <person name="Zatz M."/>
            <person name="Meidanis J."/>
            <person name="Setubal J.C."/>
        </authorList>
    </citation>
    <scope>NUCLEOTIDE SEQUENCE [LARGE SCALE GENOMIC DNA]</scope>
    <source>
        <strain>9a5c</strain>
    </source>
</reference>
<dbReference type="EC" id="3.5.4.25"/>
<dbReference type="EMBL" id="AE003849">
    <property type="protein sequence ID" value="AAF84794.1"/>
    <property type="molecule type" value="Genomic_DNA"/>
</dbReference>
<dbReference type="PIR" id="C82614">
    <property type="entry name" value="C82614"/>
</dbReference>
<dbReference type="RefSeq" id="WP_010894450.1">
    <property type="nucleotide sequence ID" value="NC_002488.3"/>
</dbReference>
<dbReference type="SMR" id="Q9PBZ3"/>
<dbReference type="STRING" id="160492.XF_1992"/>
<dbReference type="KEGG" id="xfa:XF_1992"/>
<dbReference type="eggNOG" id="COG0807">
    <property type="taxonomic scope" value="Bacteria"/>
</dbReference>
<dbReference type="HOGENOM" id="CLU_020273_1_2_6"/>
<dbReference type="UniPathway" id="UPA00275">
    <property type="reaction ID" value="UER00400"/>
</dbReference>
<dbReference type="Proteomes" id="UP000000812">
    <property type="component" value="Chromosome"/>
</dbReference>
<dbReference type="GO" id="GO:0005829">
    <property type="term" value="C:cytosol"/>
    <property type="evidence" value="ECO:0007669"/>
    <property type="project" value="TreeGrafter"/>
</dbReference>
<dbReference type="GO" id="GO:0005525">
    <property type="term" value="F:GTP binding"/>
    <property type="evidence" value="ECO:0007669"/>
    <property type="project" value="UniProtKB-KW"/>
</dbReference>
<dbReference type="GO" id="GO:0003935">
    <property type="term" value="F:GTP cyclohydrolase II activity"/>
    <property type="evidence" value="ECO:0007669"/>
    <property type="project" value="UniProtKB-UniRule"/>
</dbReference>
<dbReference type="GO" id="GO:0008270">
    <property type="term" value="F:zinc ion binding"/>
    <property type="evidence" value="ECO:0007669"/>
    <property type="project" value="UniProtKB-UniRule"/>
</dbReference>
<dbReference type="GO" id="GO:0009231">
    <property type="term" value="P:riboflavin biosynthetic process"/>
    <property type="evidence" value="ECO:0007669"/>
    <property type="project" value="UniProtKB-UniRule"/>
</dbReference>
<dbReference type="CDD" id="cd00641">
    <property type="entry name" value="GTP_cyclohydro2"/>
    <property type="match status" value="1"/>
</dbReference>
<dbReference type="Gene3D" id="3.40.50.10990">
    <property type="entry name" value="GTP cyclohydrolase II"/>
    <property type="match status" value="1"/>
</dbReference>
<dbReference type="HAMAP" id="MF_00179">
    <property type="entry name" value="RibA"/>
    <property type="match status" value="1"/>
</dbReference>
<dbReference type="InterPro" id="IPR032677">
    <property type="entry name" value="GTP_cyclohydro_II"/>
</dbReference>
<dbReference type="InterPro" id="IPR000926">
    <property type="entry name" value="RibA"/>
</dbReference>
<dbReference type="InterPro" id="IPR036144">
    <property type="entry name" value="RibA-like_sf"/>
</dbReference>
<dbReference type="NCBIfam" id="NF001591">
    <property type="entry name" value="PRK00393.1"/>
    <property type="match status" value="1"/>
</dbReference>
<dbReference type="NCBIfam" id="NF006456">
    <property type="entry name" value="PRK08815.1"/>
    <property type="match status" value="1"/>
</dbReference>
<dbReference type="PANTHER" id="PTHR21327:SF18">
    <property type="entry name" value="3,4-DIHYDROXY-2-BUTANONE 4-PHOSPHATE SYNTHASE"/>
    <property type="match status" value="1"/>
</dbReference>
<dbReference type="PANTHER" id="PTHR21327">
    <property type="entry name" value="GTP CYCLOHYDROLASE II-RELATED"/>
    <property type="match status" value="1"/>
</dbReference>
<dbReference type="Pfam" id="PF00925">
    <property type="entry name" value="GTP_cyclohydro2"/>
    <property type="match status" value="1"/>
</dbReference>
<dbReference type="PIRSF" id="PIRSF001259">
    <property type="entry name" value="RibA"/>
    <property type="match status" value="1"/>
</dbReference>
<dbReference type="SUPFAM" id="SSF142695">
    <property type="entry name" value="RibA-like"/>
    <property type="match status" value="1"/>
</dbReference>
<evidence type="ECO:0000250" key="1"/>
<evidence type="ECO:0000255" key="2"/>
<evidence type="ECO:0000256" key="3">
    <source>
        <dbReference type="SAM" id="MobiDB-lite"/>
    </source>
</evidence>
<evidence type="ECO:0000305" key="4"/>